<accession>Q24TE6</accession>
<feature type="chain" id="PRO_1000002639" description="UDP-N-acetylglucosamine--N-acetylmuramyl-(pentapeptide) pyrophosphoryl-undecaprenol N-acetylglucosamine transferase">
    <location>
        <begin position="1"/>
        <end position="369"/>
    </location>
</feature>
<feature type="binding site" evidence="1">
    <location>
        <begin position="10"/>
        <end position="12"/>
    </location>
    <ligand>
        <name>UDP-N-acetyl-alpha-D-glucosamine</name>
        <dbReference type="ChEBI" id="CHEBI:57705"/>
    </ligand>
</feature>
<feature type="binding site" evidence="1">
    <location>
        <position position="124"/>
    </location>
    <ligand>
        <name>UDP-N-acetyl-alpha-D-glucosamine</name>
        <dbReference type="ChEBI" id="CHEBI:57705"/>
    </ligand>
</feature>
<feature type="binding site" evidence="1">
    <location>
        <position position="166"/>
    </location>
    <ligand>
        <name>UDP-N-acetyl-alpha-D-glucosamine</name>
        <dbReference type="ChEBI" id="CHEBI:57705"/>
    </ligand>
</feature>
<feature type="binding site" evidence="1">
    <location>
        <position position="196"/>
    </location>
    <ligand>
        <name>UDP-N-acetyl-alpha-D-glucosamine</name>
        <dbReference type="ChEBI" id="CHEBI:57705"/>
    </ligand>
</feature>
<feature type="binding site" evidence="1">
    <location>
        <position position="300"/>
    </location>
    <ligand>
        <name>UDP-N-acetyl-alpha-D-glucosamine</name>
        <dbReference type="ChEBI" id="CHEBI:57705"/>
    </ligand>
</feature>
<gene>
    <name evidence="1" type="primary">murG</name>
    <name type="ordered locus">DSY2907</name>
</gene>
<comment type="function">
    <text evidence="1">Cell wall formation. Catalyzes the transfer of a GlcNAc subunit on undecaprenyl-pyrophosphoryl-MurNAc-pentapeptide (lipid intermediate I) to form undecaprenyl-pyrophosphoryl-MurNAc-(pentapeptide)GlcNAc (lipid intermediate II).</text>
</comment>
<comment type="catalytic activity">
    <reaction evidence="1">
        <text>di-trans,octa-cis-undecaprenyl diphospho-N-acetyl-alpha-D-muramoyl-L-alanyl-D-glutamyl-meso-2,6-diaminopimeloyl-D-alanyl-D-alanine + UDP-N-acetyl-alpha-D-glucosamine = di-trans,octa-cis-undecaprenyl diphospho-[N-acetyl-alpha-D-glucosaminyl-(1-&gt;4)]-N-acetyl-alpha-D-muramoyl-L-alanyl-D-glutamyl-meso-2,6-diaminopimeloyl-D-alanyl-D-alanine + UDP + H(+)</text>
        <dbReference type="Rhea" id="RHEA:31227"/>
        <dbReference type="ChEBI" id="CHEBI:15378"/>
        <dbReference type="ChEBI" id="CHEBI:57705"/>
        <dbReference type="ChEBI" id="CHEBI:58223"/>
        <dbReference type="ChEBI" id="CHEBI:61387"/>
        <dbReference type="ChEBI" id="CHEBI:61388"/>
        <dbReference type="EC" id="2.4.1.227"/>
    </reaction>
</comment>
<comment type="pathway">
    <text evidence="1">Cell wall biogenesis; peptidoglycan biosynthesis.</text>
</comment>
<comment type="subcellular location">
    <subcellularLocation>
        <location evidence="1">Cell membrane</location>
        <topology evidence="1">Peripheral membrane protein</topology>
        <orientation evidence="1">Cytoplasmic side</orientation>
    </subcellularLocation>
</comment>
<comment type="similarity">
    <text evidence="1">Belongs to the glycosyltransferase 28 family. MurG subfamily.</text>
</comment>
<dbReference type="EC" id="2.4.1.227" evidence="1"/>
<dbReference type="EMBL" id="AP008230">
    <property type="protein sequence ID" value="BAE84696.1"/>
    <property type="molecule type" value="Genomic_DNA"/>
</dbReference>
<dbReference type="RefSeq" id="WP_011460696.1">
    <property type="nucleotide sequence ID" value="NC_007907.1"/>
</dbReference>
<dbReference type="SMR" id="Q24TE6"/>
<dbReference type="STRING" id="138119.DSY2907"/>
<dbReference type="CAZy" id="GT28">
    <property type="family name" value="Glycosyltransferase Family 28"/>
</dbReference>
<dbReference type="KEGG" id="dsy:DSY2907"/>
<dbReference type="eggNOG" id="COG0707">
    <property type="taxonomic scope" value="Bacteria"/>
</dbReference>
<dbReference type="HOGENOM" id="CLU_037404_0_1_9"/>
<dbReference type="UniPathway" id="UPA00219"/>
<dbReference type="Proteomes" id="UP000001946">
    <property type="component" value="Chromosome"/>
</dbReference>
<dbReference type="GO" id="GO:0005886">
    <property type="term" value="C:plasma membrane"/>
    <property type="evidence" value="ECO:0007669"/>
    <property type="project" value="UniProtKB-SubCell"/>
</dbReference>
<dbReference type="GO" id="GO:0051991">
    <property type="term" value="F:UDP-N-acetyl-D-glucosamine:N-acetylmuramoyl-L-alanyl-D-glutamyl-meso-2,6-diaminopimelyl-D-alanyl-D-alanine-diphosphoundecaprenol 4-beta-N-acetylglucosaminlytransferase activity"/>
    <property type="evidence" value="ECO:0007669"/>
    <property type="project" value="RHEA"/>
</dbReference>
<dbReference type="GO" id="GO:0050511">
    <property type="term" value="F:undecaprenyldiphospho-muramoylpentapeptide beta-N-acetylglucosaminyltransferase activity"/>
    <property type="evidence" value="ECO:0007669"/>
    <property type="project" value="UniProtKB-UniRule"/>
</dbReference>
<dbReference type="GO" id="GO:0005975">
    <property type="term" value="P:carbohydrate metabolic process"/>
    <property type="evidence" value="ECO:0007669"/>
    <property type="project" value="InterPro"/>
</dbReference>
<dbReference type="GO" id="GO:0051301">
    <property type="term" value="P:cell division"/>
    <property type="evidence" value="ECO:0007669"/>
    <property type="project" value="UniProtKB-KW"/>
</dbReference>
<dbReference type="GO" id="GO:0071555">
    <property type="term" value="P:cell wall organization"/>
    <property type="evidence" value="ECO:0007669"/>
    <property type="project" value="UniProtKB-KW"/>
</dbReference>
<dbReference type="GO" id="GO:0030259">
    <property type="term" value="P:lipid glycosylation"/>
    <property type="evidence" value="ECO:0007669"/>
    <property type="project" value="UniProtKB-UniRule"/>
</dbReference>
<dbReference type="GO" id="GO:0009252">
    <property type="term" value="P:peptidoglycan biosynthetic process"/>
    <property type="evidence" value="ECO:0007669"/>
    <property type="project" value="UniProtKB-UniRule"/>
</dbReference>
<dbReference type="GO" id="GO:0008360">
    <property type="term" value="P:regulation of cell shape"/>
    <property type="evidence" value="ECO:0007669"/>
    <property type="project" value="UniProtKB-KW"/>
</dbReference>
<dbReference type="CDD" id="cd03785">
    <property type="entry name" value="GT28_MurG"/>
    <property type="match status" value="1"/>
</dbReference>
<dbReference type="Gene3D" id="3.40.50.2000">
    <property type="entry name" value="Glycogen Phosphorylase B"/>
    <property type="match status" value="2"/>
</dbReference>
<dbReference type="HAMAP" id="MF_00033">
    <property type="entry name" value="MurG"/>
    <property type="match status" value="1"/>
</dbReference>
<dbReference type="InterPro" id="IPR006009">
    <property type="entry name" value="GlcNAc_MurG"/>
</dbReference>
<dbReference type="InterPro" id="IPR007235">
    <property type="entry name" value="Glyco_trans_28_C"/>
</dbReference>
<dbReference type="InterPro" id="IPR004276">
    <property type="entry name" value="GlycoTrans_28_N"/>
</dbReference>
<dbReference type="NCBIfam" id="TIGR01133">
    <property type="entry name" value="murG"/>
    <property type="match status" value="1"/>
</dbReference>
<dbReference type="PANTHER" id="PTHR21015:SF22">
    <property type="entry name" value="GLYCOSYLTRANSFERASE"/>
    <property type="match status" value="1"/>
</dbReference>
<dbReference type="PANTHER" id="PTHR21015">
    <property type="entry name" value="UDP-N-ACETYLGLUCOSAMINE--N-ACETYLMURAMYL-(PENTAPEPTIDE) PYROPHOSPHORYL-UNDECAPRENOL N-ACETYLGLUCOSAMINE TRANSFERASE 1"/>
    <property type="match status" value="1"/>
</dbReference>
<dbReference type="Pfam" id="PF04101">
    <property type="entry name" value="Glyco_tran_28_C"/>
    <property type="match status" value="1"/>
</dbReference>
<dbReference type="Pfam" id="PF03033">
    <property type="entry name" value="Glyco_transf_28"/>
    <property type="match status" value="1"/>
</dbReference>
<dbReference type="SUPFAM" id="SSF53756">
    <property type="entry name" value="UDP-Glycosyltransferase/glycogen phosphorylase"/>
    <property type="match status" value="1"/>
</dbReference>
<proteinExistence type="inferred from homology"/>
<evidence type="ECO:0000255" key="1">
    <source>
        <dbReference type="HAMAP-Rule" id="MF_00033"/>
    </source>
</evidence>
<protein>
    <recommendedName>
        <fullName evidence="1">UDP-N-acetylglucosamine--N-acetylmuramyl-(pentapeptide) pyrophosphoryl-undecaprenol N-acetylglucosamine transferase</fullName>
        <ecNumber evidence="1">2.4.1.227</ecNumber>
    </recommendedName>
    <alternativeName>
        <fullName evidence="1">Undecaprenyl-PP-MurNAc-pentapeptide-UDPGlcNAc GlcNAc transferase</fullName>
    </alternativeName>
</protein>
<sequence>MRVIVTGGGTGGHIYPALAIAKGILAQRPDAEILYIGTREGMEARLVPEAGIEFSGVSGQGLPRKLSLETLKVGGKSFKALWETKQILKKFKPDLVVGTGGYVAGPVVLTAALFGIPTLLHEQNALPGITNKILTRFVRKVMVTFPESIAHFGVQKKLVLTGLPVRAEIGNISREKGAEDLGLRSDCLTLLVTGGSRGARSINQAMPTVLKHLAGRKDIQVIWATGKATYQETLENLKAQGIQWQRENWRVLEYLKDMPEALACADLFVGRAGATTLAEIMVAGKPGILIPYPLAAENHQEFNARALEKDGAACVILDQDLTGENLWALVQGLLEKPEKLRKMAQAARGLGQPDALNKIVNVCLDTAWK</sequence>
<organism>
    <name type="scientific">Desulfitobacterium hafniense (strain Y51)</name>
    <dbReference type="NCBI Taxonomy" id="138119"/>
    <lineage>
        <taxon>Bacteria</taxon>
        <taxon>Bacillati</taxon>
        <taxon>Bacillota</taxon>
        <taxon>Clostridia</taxon>
        <taxon>Eubacteriales</taxon>
        <taxon>Desulfitobacteriaceae</taxon>
        <taxon>Desulfitobacterium</taxon>
    </lineage>
</organism>
<name>MURG_DESHY</name>
<keyword id="KW-0131">Cell cycle</keyword>
<keyword id="KW-0132">Cell division</keyword>
<keyword id="KW-1003">Cell membrane</keyword>
<keyword id="KW-0133">Cell shape</keyword>
<keyword id="KW-0961">Cell wall biogenesis/degradation</keyword>
<keyword id="KW-0328">Glycosyltransferase</keyword>
<keyword id="KW-0472">Membrane</keyword>
<keyword id="KW-0573">Peptidoglycan synthesis</keyword>
<keyword id="KW-1185">Reference proteome</keyword>
<keyword id="KW-0808">Transferase</keyword>
<reference key="1">
    <citation type="journal article" date="2006" name="J. Bacteriol.">
        <title>Complete genome sequence of the dehalorespiring bacterium Desulfitobacterium hafniense Y51 and comparison with Dehalococcoides ethenogenes 195.</title>
        <authorList>
            <person name="Nonaka H."/>
            <person name="Keresztes G."/>
            <person name="Shinoda Y."/>
            <person name="Ikenaga Y."/>
            <person name="Abe M."/>
            <person name="Naito K."/>
            <person name="Inatomi K."/>
            <person name="Furukawa K."/>
            <person name="Inui M."/>
            <person name="Yukawa H."/>
        </authorList>
    </citation>
    <scope>NUCLEOTIDE SEQUENCE [LARGE SCALE GENOMIC DNA]</scope>
    <source>
        <strain>Y51</strain>
    </source>
</reference>